<gene>
    <name evidence="1" type="primary">glpE</name>
    <name type="ordered locus">SDY_3650</name>
</gene>
<reference key="1">
    <citation type="journal article" date="2005" name="Nucleic Acids Res.">
        <title>Genome dynamics and diversity of Shigella species, the etiologic agents of bacillary dysentery.</title>
        <authorList>
            <person name="Yang F."/>
            <person name="Yang J."/>
            <person name="Zhang X."/>
            <person name="Chen L."/>
            <person name="Jiang Y."/>
            <person name="Yan Y."/>
            <person name="Tang X."/>
            <person name="Wang J."/>
            <person name="Xiong Z."/>
            <person name="Dong J."/>
            <person name="Xue Y."/>
            <person name="Zhu Y."/>
            <person name="Xu X."/>
            <person name="Sun L."/>
            <person name="Chen S."/>
            <person name="Nie H."/>
            <person name="Peng J."/>
            <person name="Xu J."/>
            <person name="Wang Y."/>
            <person name="Yuan Z."/>
            <person name="Wen Y."/>
            <person name="Yao Z."/>
            <person name="Shen Y."/>
            <person name="Qiang B."/>
            <person name="Hou Y."/>
            <person name="Yu J."/>
            <person name="Jin Q."/>
        </authorList>
    </citation>
    <scope>NUCLEOTIDE SEQUENCE [LARGE SCALE GENOMIC DNA]</scope>
    <source>
        <strain>Sd197</strain>
    </source>
</reference>
<name>GLPE_SHIDS</name>
<comment type="function">
    <text evidence="1">Transferase that catalyzes the transfer of sulfur from thiosulfate to thiophilic acceptors such as cyanide or dithiols. May function in a CysM-independent thiosulfate assimilation pathway by catalyzing the conversion of thiosulfate to sulfite, which can then be used for L-cysteine biosynthesis.</text>
</comment>
<comment type="catalytic activity">
    <reaction evidence="1">
        <text>thiosulfate + hydrogen cyanide = thiocyanate + sulfite + 2 H(+)</text>
        <dbReference type="Rhea" id="RHEA:16881"/>
        <dbReference type="ChEBI" id="CHEBI:15378"/>
        <dbReference type="ChEBI" id="CHEBI:17359"/>
        <dbReference type="ChEBI" id="CHEBI:18022"/>
        <dbReference type="ChEBI" id="CHEBI:18407"/>
        <dbReference type="ChEBI" id="CHEBI:33542"/>
        <dbReference type="EC" id="2.8.1.1"/>
    </reaction>
</comment>
<comment type="catalytic activity">
    <reaction evidence="1">
        <text>thiosulfate + [thioredoxin]-dithiol = [thioredoxin]-disulfide + hydrogen sulfide + sulfite + 2 H(+)</text>
        <dbReference type="Rhea" id="RHEA:83859"/>
        <dbReference type="Rhea" id="RHEA-COMP:10698"/>
        <dbReference type="Rhea" id="RHEA-COMP:10700"/>
        <dbReference type="ChEBI" id="CHEBI:15378"/>
        <dbReference type="ChEBI" id="CHEBI:17359"/>
        <dbReference type="ChEBI" id="CHEBI:29919"/>
        <dbReference type="ChEBI" id="CHEBI:29950"/>
        <dbReference type="ChEBI" id="CHEBI:33542"/>
        <dbReference type="ChEBI" id="CHEBI:50058"/>
    </reaction>
</comment>
<comment type="subcellular location">
    <subcellularLocation>
        <location evidence="1">Cytoplasm</location>
    </subcellularLocation>
</comment>
<comment type="similarity">
    <text evidence="1">Belongs to the GlpE family.</text>
</comment>
<keyword id="KW-0963">Cytoplasm</keyword>
<keyword id="KW-1185">Reference proteome</keyword>
<keyword id="KW-0808">Transferase</keyword>
<protein>
    <recommendedName>
        <fullName evidence="1">Thiosulfate sulfurtransferase GlpE</fullName>
        <ecNumber evidence="1">2.8.1.1</ecNumber>
    </recommendedName>
</protein>
<organism>
    <name type="scientific">Shigella dysenteriae serotype 1 (strain Sd197)</name>
    <dbReference type="NCBI Taxonomy" id="300267"/>
    <lineage>
        <taxon>Bacteria</taxon>
        <taxon>Pseudomonadati</taxon>
        <taxon>Pseudomonadota</taxon>
        <taxon>Gammaproteobacteria</taxon>
        <taxon>Enterobacterales</taxon>
        <taxon>Enterobacteriaceae</taxon>
        <taxon>Shigella</taxon>
    </lineage>
</organism>
<sequence length="108" mass="12112">MDQFECINVADAHQKLQEKEAVLVDIRDPQSFAMGHAVQTFHLTNDTLGAFMRDNDFDTPVMVMCYHGNSSKGAAQYLLQQGYDVVYSIDGGFEAWQRQFPAEVAYGA</sequence>
<evidence type="ECO:0000255" key="1">
    <source>
        <dbReference type="HAMAP-Rule" id="MF_01009"/>
    </source>
</evidence>
<proteinExistence type="inferred from homology"/>
<accession>Q32AN7</accession>
<feature type="chain" id="PRO_1000062978" description="Thiosulfate sulfurtransferase GlpE">
    <location>
        <begin position="1"/>
        <end position="108"/>
    </location>
</feature>
<feature type="domain" description="Rhodanese" evidence="1">
    <location>
        <begin position="17"/>
        <end position="105"/>
    </location>
</feature>
<feature type="active site" description="Cysteine persulfide intermediate" evidence="1">
    <location>
        <position position="65"/>
    </location>
</feature>
<dbReference type="EC" id="2.8.1.1" evidence="1"/>
<dbReference type="EMBL" id="CP000034">
    <property type="protein sequence ID" value="ABB63618.1"/>
    <property type="molecule type" value="Genomic_DNA"/>
</dbReference>
<dbReference type="RefSeq" id="WP_000371932.1">
    <property type="nucleotide sequence ID" value="NC_007606.1"/>
</dbReference>
<dbReference type="RefSeq" id="YP_405109.1">
    <property type="nucleotide sequence ID" value="NC_007606.1"/>
</dbReference>
<dbReference type="SMR" id="Q32AN7"/>
<dbReference type="STRING" id="300267.SDY_3650"/>
<dbReference type="EnsemblBacteria" id="ABB63618">
    <property type="protein sequence ID" value="ABB63618"/>
    <property type="gene ID" value="SDY_3650"/>
</dbReference>
<dbReference type="KEGG" id="sdy:SDY_3650"/>
<dbReference type="PATRIC" id="fig|300267.13.peg.4332"/>
<dbReference type="HOGENOM" id="CLU_089574_14_0_6"/>
<dbReference type="Proteomes" id="UP000002716">
    <property type="component" value="Chromosome"/>
</dbReference>
<dbReference type="GO" id="GO:0005737">
    <property type="term" value="C:cytoplasm"/>
    <property type="evidence" value="ECO:0007669"/>
    <property type="project" value="UniProtKB-SubCell"/>
</dbReference>
<dbReference type="GO" id="GO:0004792">
    <property type="term" value="F:thiosulfate-cyanide sulfurtransferase activity"/>
    <property type="evidence" value="ECO:0007669"/>
    <property type="project" value="UniProtKB-UniRule"/>
</dbReference>
<dbReference type="GO" id="GO:0006071">
    <property type="term" value="P:glycerol metabolic process"/>
    <property type="evidence" value="ECO:0007669"/>
    <property type="project" value="UniProtKB-UniRule"/>
</dbReference>
<dbReference type="CDD" id="cd01444">
    <property type="entry name" value="GlpE_ST"/>
    <property type="match status" value="1"/>
</dbReference>
<dbReference type="FunFam" id="3.40.250.10:FF:000007">
    <property type="entry name" value="Thiosulfate sulfurtransferase GlpE"/>
    <property type="match status" value="1"/>
</dbReference>
<dbReference type="Gene3D" id="3.40.250.10">
    <property type="entry name" value="Rhodanese-like domain"/>
    <property type="match status" value="1"/>
</dbReference>
<dbReference type="HAMAP" id="MF_01009">
    <property type="entry name" value="Thiosulf_sulfurtr"/>
    <property type="match status" value="1"/>
</dbReference>
<dbReference type="InterPro" id="IPR050229">
    <property type="entry name" value="GlpE_sulfurtransferase"/>
</dbReference>
<dbReference type="InterPro" id="IPR001763">
    <property type="entry name" value="Rhodanese-like_dom"/>
</dbReference>
<dbReference type="InterPro" id="IPR036873">
    <property type="entry name" value="Rhodanese-like_dom_sf"/>
</dbReference>
<dbReference type="InterPro" id="IPR023695">
    <property type="entry name" value="Thiosulf_sulfurTrfase"/>
</dbReference>
<dbReference type="NCBIfam" id="NF001195">
    <property type="entry name" value="PRK00162.1"/>
    <property type="match status" value="1"/>
</dbReference>
<dbReference type="PANTHER" id="PTHR43031">
    <property type="entry name" value="FAD-DEPENDENT OXIDOREDUCTASE"/>
    <property type="match status" value="1"/>
</dbReference>
<dbReference type="PANTHER" id="PTHR43031:SF6">
    <property type="entry name" value="THIOSULFATE SULFURTRANSFERASE GLPE"/>
    <property type="match status" value="1"/>
</dbReference>
<dbReference type="Pfam" id="PF00581">
    <property type="entry name" value="Rhodanese"/>
    <property type="match status" value="1"/>
</dbReference>
<dbReference type="SMART" id="SM00450">
    <property type="entry name" value="RHOD"/>
    <property type="match status" value="1"/>
</dbReference>
<dbReference type="SUPFAM" id="SSF52821">
    <property type="entry name" value="Rhodanese/Cell cycle control phosphatase"/>
    <property type="match status" value="1"/>
</dbReference>
<dbReference type="PROSITE" id="PS50206">
    <property type="entry name" value="RHODANESE_3"/>
    <property type="match status" value="1"/>
</dbReference>